<keyword id="KW-0108">Calcium channel impairing toxin</keyword>
<keyword id="KW-0903">Direct protein sequencing</keyword>
<keyword id="KW-1015">Disulfide bond</keyword>
<keyword id="KW-0872">Ion channel impairing toxin</keyword>
<keyword id="KW-0960">Knottin</keyword>
<keyword id="KW-0528">Neurotoxin</keyword>
<keyword id="KW-0964">Secreted</keyword>
<keyword id="KW-0800">Toxin</keyword>
<keyword id="KW-1218">Voltage-gated calcium channel impairing toxin</keyword>
<comment type="function">
    <text evidence="1">Inhibits insect, but not mammalian, voltage-gated calcium channels (Cav).</text>
</comment>
<comment type="subcellular location">
    <subcellularLocation>
        <location evidence="2">Secreted</location>
    </subcellularLocation>
</comment>
<comment type="tissue specificity">
    <text evidence="5">Expressed by the venom gland.</text>
</comment>
<comment type="domain">
    <text evidence="1">The presence of a 'disulfide through disulfide knot' structurally defines this protein as a knottin.</text>
</comment>
<comment type="similarity">
    <text evidence="4">Belongs to the neurotoxin 08 (Shiva) family. 01 (omega toxin) subfamily.</text>
</comment>
<accession>P81598</accession>
<dbReference type="BMRB" id="P81598"/>
<dbReference type="SMR" id="P81598"/>
<dbReference type="TCDB" id="8.B.16.1.4">
    <property type="family name" value="the maurocalcine (maca) family"/>
</dbReference>
<dbReference type="ArachnoServer" id="AS000200">
    <property type="toxin name" value="omega-hexatoxin-Hv1e"/>
</dbReference>
<dbReference type="GO" id="GO:0005576">
    <property type="term" value="C:extracellular region"/>
    <property type="evidence" value="ECO:0007669"/>
    <property type="project" value="UniProtKB-SubCell"/>
</dbReference>
<dbReference type="GO" id="GO:0019855">
    <property type="term" value="F:calcium channel inhibitor activity"/>
    <property type="evidence" value="ECO:0007669"/>
    <property type="project" value="InterPro"/>
</dbReference>
<dbReference type="GO" id="GO:0090729">
    <property type="term" value="F:toxin activity"/>
    <property type="evidence" value="ECO:0007669"/>
    <property type="project" value="UniProtKB-KW"/>
</dbReference>
<dbReference type="GO" id="GO:0006952">
    <property type="term" value="P:defense response"/>
    <property type="evidence" value="ECO:0007669"/>
    <property type="project" value="InterPro"/>
</dbReference>
<dbReference type="InterPro" id="IPR009415">
    <property type="entry name" value="Omega-atracotox"/>
</dbReference>
<dbReference type="InterPro" id="IPR018071">
    <property type="entry name" value="Omega-atracotox_CS"/>
</dbReference>
<dbReference type="Pfam" id="PF06357">
    <property type="entry name" value="Omega-toxin"/>
    <property type="match status" value="1"/>
</dbReference>
<dbReference type="SUPFAM" id="SSF57059">
    <property type="entry name" value="omega toxin-like"/>
    <property type="match status" value="1"/>
</dbReference>
<dbReference type="PROSITE" id="PS60016">
    <property type="entry name" value="OMEGA_ACTX_1"/>
    <property type="match status" value="1"/>
</dbReference>
<protein>
    <recommendedName>
        <fullName evidence="4">Omega-hexatoxin-Hv1e</fullName>
        <shortName evidence="4">Omega-HXTX-Hv1e</shortName>
    </recommendedName>
    <alternativeName>
        <fullName evidence="3">Omega-atracotoxin-Hv1e</fullName>
        <shortName evidence="3">Omega-AcTx-Hv1e</shortName>
    </alternativeName>
</protein>
<sequence length="37" mass="4071">SPTCIPSGQPCPYNENCCSQSCTYKENENGNTVKRCD</sequence>
<organism>
    <name type="scientific">Hadronyche versuta</name>
    <name type="common">Blue mountains funnel-web spider</name>
    <name type="synonym">Atrax versutus</name>
    <dbReference type="NCBI Taxonomy" id="6904"/>
    <lineage>
        <taxon>Eukaryota</taxon>
        <taxon>Metazoa</taxon>
        <taxon>Ecdysozoa</taxon>
        <taxon>Arthropoda</taxon>
        <taxon>Chelicerata</taxon>
        <taxon>Arachnida</taxon>
        <taxon>Araneae</taxon>
        <taxon>Mygalomorphae</taxon>
        <taxon>Hexathelidae</taxon>
        <taxon>Hadronyche</taxon>
    </lineage>
</organism>
<proteinExistence type="evidence at protein level"/>
<feature type="peptide" id="PRO_0000044992" description="Omega-hexatoxin-Hv1e" evidence="2">
    <location>
        <begin position="1"/>
        <end position="37"/>
    </location>
</feature>
<feature type="site" description="Critical for insecticidal activity" evidence="1">
    <location>
        <position position="10"/>
    </location>
</feature>
<feature type="site" description="Critical for insecticidal activity" evidence="1">
    <location>
        <position position="27"/>
    </location>
</feature>
<feature type="site" description="Critical for insecticidal activity" evidence="1">
    <location>
        <position position="35"/>
    </location>
</feature>
<feature type="disulfide bond" evidence="1">
    <location>
        <begin position="4"/>
        <end position="18"/>
    </location>
</feature>
<feature type="disulfide bond" evidence="1">
    <location>
        <begin position="11"/>
        <end position="22"/>
    </location>
</feature>
<feature type="disulfide bond" evidence="1">
    <location>
        <begin position="17"/>
        <end position="36"/>
    </location>
</feature>
<reference key="1">
    <citation type="journal article" date="1999" name="Eur. J. Biochem.">
        <title>Structure-function studies of omega-atracotoxin, a potent antagonist of insect voltage-gated calcium channels.</title>
        <authorList>
            <person name="Wang X.-H."/>
            <person name="Smith R."/>
            <person name="Fletcher J.I."/>
            <person name="Wilson H."/>
            <person name="Wood C.J."/>
            <person name="Merlin E.H."/>
            <person name="King G.F."/>
        </authorList>
    </citation>
    <scope>PROTEIN SEQUENCE</scope>
    <scope>SUBCELLULAR LOCATION</scope>
    <source>
        <tissue>Venom</tissue>
    </source>
</reference>
<name>TO1E_HADVE</name>
<evidence type="ECO:0000250" key="1">
    <source>
        <dbReference type="UniProtKB" id="P56207"/>
    </source>
</evidence>
<evidence type="ECO:0000269" key="2">
    <source>
    </source>
</evidence>
<evidence type="ECO:0000303" key="3">
    <source>
    </source>
</evidence>
<evidence type="ECO:0000305" key="4"/>
<evidence type="ECO:0000305" key="5">
    <source>
    </source>
</evidence>